<reference key="1">
    <citation type="submission" date="2008-08" db="EMBL/GenBank/DDBJ databases">
        <title>Complete sequence of Anaeromyxobacter sp. K.</title>
        <authorList>
            <consortium name="US DOE Joint Genome Institute"/>
            <person name="Lucas S."/>
            <person name="Copeland A."/>
            <person name="Lapidus A."/>
            <person name="Glavina del Rio T."/>
            <person name="Dalin E."/>
            <person name="Tice H."/>
            <person name="Bruce D."/>
            <person name="Goodwin L."/>
            <person name="Pitluck S."/>
            <person name="Saunders E."/>
            <person name="Brettin T."/>
            <person name="Detter J.C."/>
            <person name="Han C."/>
            <person name="Larimer F."/>
            <person name="Land M."/>
            <person name="Hauser L."/>
            <person name="Kyrpides N."/>
            <person name="Ovchinnikiva G."/>
            <person name="Beliaev A."/>
        </authorList>
    </citation>
    <scope>NUCLEOTIDE SEQUENCE [LARGE SCALE GENOMIC DNA]</scope>
    <source>
        <strain>K</strain>
    </source>
</reference>
<gene>
    <name evidence="1" type="primary">lpxA</name>
    <name type="ordered locus">AnaeK_1144</name>
</gene>
<keyword id="KW-0012">Acyltransferase</keyword>
<keyword id="KW-0963">Cytoplasm</keyword>
<keyword id="KW-0441">Lipid A biosynthesis</keyword>
<keyword id="KW-0444">Lipid biosynthesis</keyword>
<keyword id="KW-0443">Lipid metabolism</keyword>
<keyword id="KW-0677">Repeat</keyword>
<keyword id="KW-0808">Transferase</keyword>
<dbReference type="EC" id="2.3.1.129" evidence="1"/>
<dbReference type="EMBL" id="CP001131">
    <property type="protein sequence ID" value="ACG72377.1"/>
    <property type="molecule type" value="Genomic_DNA"/>
</dbReference>
<dbReference type="RefSeq" id="WP_012525203.1">
    <property type="nucleotide sequence ID" value="NC_011145.1"/>
</dbReference>
<dbReference type="SMR" id="B4UGV2"/>
<dbReference type="KEGG" id="ank:AnaeK_1144"/>
<dbReference type="HOGENOM" id="CLU_061249_0_0_7"/>
<dbReference type="OrthoDB" id="9807278at2"/>
<dbReference type="UniPathway" id="UPA00359">
    <property type="reaction ID" value="UER00477"/>
</dbReference>
<dbReference type="Proteomes" id="UP000001871">
    <property type="component" value="Chromosome"/>
</dbReference>
<dbReference type="GO" id="GO:0005737">
    <property type="term" value="C:cytoplasm"/>
    <property type="evidence" value="ECO:0007669"/>
    <property type="project" value="UniProtKB-SubCell"/>
</dbReference>
<dbReference type="GO" id="GO:0016020">
    <property type="term" value="C:membrane"/>
    <property type="evidence" value="ECO:0007669"/>
    <property type="project" value="GOC"/>
</dbReference>
<dbReference type="GO" id="GO:0008780">
    <property type="term" value="F:acyl-[acyl-carrier-protein]-UDP-N-acetylglucosamine O-acyltransferase activity"/>
    <property type="evidence" value="ECO:0007669"/>
    <property type="project" value="UniProtKB-UniRule"/>
</dbReference>
<dbReference type="GO" id="GO:0009245">
    <property type="term" value="P:lipid A biosynthetic process"/>
    <property type="evidence" value="ECO:0007669"/>
    <property type="project" value="UniProtKB-UniRule"/>
</dbReference>
<dbReference type="CDD" id="cd03351">
    <property type="entry name" value="LbH_UDP-GlcNAc_AT"/>
    <property type="match status" value="1"/>
</dbReference>
<dbReference type="Gene3D" id="2.160.10.10">
    <property type="entry name" value="Hexapeptide repeat proteins"/>
    <property type="match status" value="1"/>
</dbReference>
<dbReference type="Gene3D" id="1.20.1180.10">
    <property type="entry name" value="Udp N-acetylglucosamine O-acyltransferase, C-terminal domain"/>
    <property type="match status" value="1"/>
</dbReference>
<dbReference type="HAMAP" id="MF_00387">
    <property type="entry name" value="LpxA"/>
    <property type="match status" value="1"/>
</dbReference>
<dbReference type="InterPro" id="IPR029098">
    <property type="entry name" value="Acetyltransf_C"/>
</dbReference>
<dbReference type="InterPro" id="IPR037157">
    <property type="entry name" value="Acetyltransf_C_sf"/>
</dbReference>
<dbReference type="InterPro" id="IPR010137">
    <property type="entry name" value="Lipid_A_LpxA"/>
</dbReference>
<dbReference type="InterPro" id="IPR011004">
    <property type="entry name" value="Trimer_LpxA-like_sf"/>
</dbReference>
<dbReference type="NCBIfam" id="TIGR01852">
    <property type="entry name" value="lipid_A_lpxA"/>
    <property type="match status" value="1"/>
</dbReference>
<dbReference type="NCBIfam" id="NF003657">
    <property type="entry name" value="PRK05289.1"/>
    <property type="match status" value="1"/>
</dbReference>
<dbReference type="PANTHER" id="PTHR43480">
    <property type="entry name" value="ACYL-[ACYL-CARRIER-PROTEIN]--UDP-N-ACETYLGLUCOSAMINE O-ACYLTRANSFERASE"/>
    <property type="match status" value="1"/>
</dbReference>
<dbReference type="PANTHER" id="PTHR43480:SF1">
    <property type="entry name" value="ACYL-[ACYL-CARRIER-PROTEIN]--UDP-N-ACETYLGLUCOSAMINE O-ACYLTRANSFERASE, MITOCHONDRIAL-RELATED"/>
    <property type="match status" value="1"/>
</dbReference>
<dbReference type="Pfam" id="PF13720">
    <property type="entry name" value="Acetyltransf_11"/>
    <property type="match status" value="1"/>
</dbReference>
<dbReference type="PIRSF" id="PIRSF000456">
    <property type="entry name" value="UDP-GlcNAc_acltr"/>
    <property type="match status" value="1"/>
</dbReference>
<dbReference type="SUPFAM" id="SSF51161">
    <property type="entry name" value="Trimeric LpxA-like enzymes"/>
    <property type="match status" value="1"/>
</dbReference>
<sequence>MAIHPTAIVEAGAQVDPSCEIGPFAVIGPLVRMGPGNSVGPHAVVTGRTTLGASNRIFPHAVIGGIPQDLKYRGEDTALVIGDRNTFREFATVNLGTAGGGGVTRIGSGGLFMASSHIGHDCQVGDGAIIANSVAIAGHVLIEDHVHFGGLSASHQFCRVGRLAFVGGMTGVAMDVAPYCTVAGARGELAGLNAIGMQRAGLTEEQIGRVKQAYKIVFRSSLGLAEAIAQLEAELAGHPETDHFIAFLKGSQRGITR</sequence>
<evidence type="ECO:0000255" key="1">
    <source>
        <dbReference type="HAMAP-Rule" id="MF_00387"/>
    </source>
</evidence>
<name>LPXA_ANASK</name>
<organism>
    <name type="scientific">Anaeromyxobacter sp. (strain K)</name>
    <dbReference type="NCBI Taxonomy" id="447217"/>
    <lineage>
        <taxon>Bacteria</taxon>
        <taxon>Pseudomonadati</taxon>
        <taxon>Myxococcota</taxon>
        <taxon>Myxococcia</taxon>
        <taxon>Myxococcales</taxon>
        <taxon>Cystobacterineae</taxon>
        <taxon>Anaeromyxobacteraceae</taxon>
        <taxon>Anaeromyxobacter</taxon>
    </lineage>
</organism>
<feature type="chain" id="PRO_1000122685" description="Acyl-[acyl-carrier-protein]--UDP-N-acetylglucosamine O-acyltransferase">
    <location>
        <begin position="1"/>
        <end position="257"/>
    </location>
</feature>
<comment type="function">
    <text evidence="1">Involved in the biosynthesis of lipid A, a phosphorylated glycolipid that anchors the lipopolysaccharide to the outer membrane of the cell.</text>
</comment>
<comment type="catalytic activity">
    <reaction evidence="1">
        <text>a (3R)-hydroxyacyl-[ACP] + UDP-N-acetyl-alpha-D-glucosamine = a UDP-3-O-[(3R)-3-hydroxyacyl]-N-acetyl-alpha-D-glucosamine + holo-[ACP]</text>
        <dbReference type="Rhea" id="RHEA:67812"/>
        <dbReference type="Rhea" id="RHEA-COMP:9685"/>
        <dbReference type="Rhea" id="RHEA-COMP:9945"/>
        <dbReference type="ChEBI" id="CHEBI:57705"/>
        <dbReference type="ChEBI" id="CHEBI:64479"/>
        <dbReference type="ChEBI" id="CHEBI:78827"/>
        <dbReference type="ChEBI" id="CHEBI:173225"/>
        <dbReference type="EC" id="2.3.1.129"/>
    </reaction>
</comment>
<comment type="pathway">
    <text evidence="1">Glycolipid biosynthesis; lipid IV(A) biosynthesis; lipid IV(A) from (3R)-3-hydroxytetradecanoyl-[acyl-carrier-protein] and UDP-N-acetyl-alpha-D-glucosamine: step 1/6.</text>
</comment>
<comment type="subunit">
    <text evidence="1">Homotrimer.</text>
</comment>
<comment type="subcellular location">
    <subcellularLocation>
        <location evidence="1">Cytoplasm</location>
    </subcellularLocation>
</comment>
<comment type="similarity">
    <text evidence="1">Belongs to the transferase hexapeptide repeat family. LpxA subfamily.</text>
</comment>
<proteinExistence type="inferred from homology"/>
<protein>
    <recommendedName>
        <fullName evidence="1">Acyl-[acyl-carrier-protein]--UDP-N-acetylglucosamine O-acyltransferase</fullName>
        <shortName evidence="1">UDP-N-acetylglucosamine acyltransferase</shortName>
        <ecNumber evidence="1">2.3.1.129</ecNumber>
    </recommendedName>
</protein>
<accession>B4UGV2</accession>